<organism>
    <name type="scientific">Bacillus cereus (strain 03BB102)</name>
    <dbReference type="NCBI Taxonomy" id="572264"/>
    <lineage>
        <taxon>Bacteria</taxon>
        <taxon>Bacillati</taxon>
        <taxon>Bacillota</taxon>
        <taxon>Bacilli</taxon>
        <taxon>Bacillales</taxon>
        <taxon>Bacillaceae</taxon>
        <taxon>Bacillus</taxon>
        <taxon>Bacillus cereus group</taxon>
    </lineage>
</organism>
<name>PDXT_BACC3</name>
<protein>
    <recommendedName>
        <fullName evidence="1">Pyridoxal 5'-phosphate synthase subunit PdxT</fullName>
        <ecNumber evidence="1">4.3.3.6</ecNumber>
    </recommendedName>
    <alternativeName>
        <fullName evidence="1">Pdx2</fullName>
    </alternativeName>
    <alternativeName>
        <fullName evidence="1">Pyridoxal 5'-phosphate synthase glutaminase subunit</fullName>
        <ecNumber evidence="1">3.5.1.2</ecNumber>
    </alternativeName>
</protein>
<reference key="1">
    <citation type="submission" date="2009-02" db="EMBL/GenBank/DDBJ databases">
        <title>Genome sequence of Bacillus cereus 03BB102.</title>
        <authorList>
            <person name="Dodson R.J."/>
            <person name="Jackson P."/>
            <person name="Munk A.C."/>
            <person name="Brettin T."/>
            <person name="Bruce D."/>
            <person name="Detter C."/>
            <person name="Tapia R."/>
            <person name="Han C."/>
            <person name="Sutton G."/>
            <person name="Sims D."/>
        </authorList>
    </citation>
    <scope>NUCLEOTIDE SEQUENCE [LARGE SCALE GENOMIC DNA]</scope>
    <source>
        <strain>03BB102</strain>
    </source>
</reference>
<proteinExistence type="inferred from homology"/>
<sequence>MVKIGVLGLQGAVREHVKSVEASGAEAVVVKRIEQLEEIDGLILPGGESTTMRRLIDKYDFMEPLRTFAKSGKPMFGTCAGMILLAKTLIGYDEAHIGAMDITVERNAFGRQKDSFEAALSIKGVGEDFVGVFIRAPYVVDVADDVEVLSTHGDRMVAVRQGPFLAASFHPELTDDHRVTAYFVEMVKEAKMKKVV</sequence>
<feature type="chain" id="PRO_1000185874" description="Pyridoxal 5'-phosphate synthase subunit PdxT">
    <location>
        <begin position="1"/>
        <end position="196"/>
    </location>
</feature>
<feature type="active site" description="Nucleophile" evidence="1">
    <location>
        <position position="79"/>
    </location>
</feature>
<feature type="active site" description="Charge relay system" evidence="1">
    <location>
        <position position="170"/>
    </location>
</feature>
<feature type="active site" description="Charge relay system" evidence="1">
    <location>
        <position position="172"/>
    </location>
</feature>
<feature type="binding site" evidence="1">
    <location>
        <begin position="47"/>
        <end position="49"/>
    </location>
    <ligand>
        <name>L-glutamine</name>
        <dbReference type="ChEBI" id="CHEBI:58359"/>
    </ligand>
</feature>
<feature type="binding site" evidence="1">
    <location>
        <position position="106"/>
    </location>
    <ligand>
        <name>L-glutamine</name>
        <dbReference type="ChEBI" id="CHEBI:58359"/>
    </ligand>
</feature>
<feature type="binding site" evidence="1">
    <location>
        <begin position="134"/>
        <end position="135"/>
    </location>
    <ligand>
        <name>L-glutamine</name>
        <dbReference type="ChEBI" id="CHEBI:58359"/>
    </ligand>
</feature>
<evidence type="ECO:0000255" key="1">
    <source>
        <dbReference type="HAMAP-Rule" id="MF_01615"/>
    </source>
</evidence>
<dbReference type="EC" id="4.3.3.6" evidence="1"/>
<dbReference type="EC" id="3.5.1.2" evidence="1"/>
<dbReference type="EMBL" id="CP001407">
    <property type="protein sequence ID" value="ACO26536.1"/>
    <property type="molecule type" value="Genomic_DNA"/>
</dbReference>
<dbReference type="RefSeq" id="WP_000238799.1">
    <property type="nucleotide sequence ID" value="NZ_CP009318.1"/>
</dbReference>
<dbReference type="SMR" id="C1ES18"/>
<dbReference type="KEGG" id="bcx:BCA_0017"/>
<dbReference type="PATRIC" id="fig|572264.18.peg.77"/>
<dbReference type="UniPathway" id="UPA00245"/>
<dbReference type="Proteomes" id="UP000002210">
    <property type="component" value="Chromosome"/>
</dbReference>
<dbReference type="GO" id="GO:0005829">
    <property type="term" value="C:cytosol"/>
    <property type="evidence" value="ECO:0007669"/>
    <property type="project" value="TreeGrafter"/>
</dbReference>
<dbReference type="GO" id="GO:1903600">
    <property type="term" value="C:glutaminase complex"/>
    <property type="evidence" value="ECO:0007669"/>
    <property type="project" value="TreeGrafter"/>
</dbReference>
<dbReference type="GO" id="GO:0004359">
    <property type="term" value="F:glutaminase activity"/>
    <property type="evidence" value="ECO:0007669"/>
    <property type="project" value="UniProtKB-UniRule"/>
</dbReference>
<dbReference type="GO" id="GO:0036381">
    <property type="term" value="F:pyridoxal 5'-phosphate synthase (glutamine hydrolysing) activity"/>
    <property type="evidence" value="ECO:0007669"/>
    <property type="project" value="UniProtKB-UniRule"/>
</dbReference>
<dbReference type="GO" id="GO:0006543">
    <property type="term" value="P:glutamine catabolic process"/>
    <property type="evidence" value="ECO:0007669"/>
    <property type="project" value="UniProtKB-UniRule"/>
</dbReference>
<dbReference type="GO" id="GO:0042823">
    <property type="term" value="P:pyridoxal phosphate biosynthetic process"/>
    <property type="evidence" value="ECO:0007669"/>
    <property type="project" value="UniProtKB-UniRule"/>
</dbReference>
<dbReference type="GO" id="GO:0008614">
    <property type="term" value="P:pyridoxine metabolic process"/>
    <property type="evidence" value="ECO:0007669"/>
    <property type="project" value="TreeGrafter"/>
</dbReference>
<dbReference type="CDD" id="cd01749">
    <property type="entry name" value="GATase1_PB"/>
    <property type="match status" value="1"/>
</dbReference>
<dbReference type="FunFam" id="3.40.50.880:FF:000010">
    <property type="entry name" value="uncharacterized protein LOC100176842 isoform X2"/>
    <property type="match status" value="1"/>
</dbReference>
<dbReference type="Gene3D" id="3.40.50.880">
    <property type="match status" value="1"/>
</dbReference>
<dbReference type="HAMAP" id="MF_01615">
    <property type="entry name" value="PdxT"/>
    <property type="match status" value="1"/>
</dbReference>
<dbReference type="InterPro" id="IPR029062">
    <property type="entry name" value="Class_I_gatase-like"/>
</dbReference>
<dbReference type="InterPro" id="IPR002161">
    <property type="entry name" value="PdxT/SNO"/>
</dbReference>
<dbReference type="InterPro" id="IPR021196">
    <property type="entry name" value="PdxT/SNO_CS"/>
</dbReference>
<dbReference type="NCBIfam" id="TIGR03800">
    <property type="entry name" value="PLP_synth_Pdx2"/>
    <property type="match status" value="1"/>
</dbReference>
<dbReference type="PANTHER" id="PTHR31559">
    <property type="entry name" value="PYRIDOXAL 5'-PHOSPHATE SYNTHASE SUBUNIT SNO"/>
    <property type="match status" value="1"/>
</dbReference>
<dbReference type="PANTHER" id="PTHR31559:SF0">
    <property type="entry name" value="PYRIDOXAL 5'-PHOSPHATE SYNTHASE SUBUNIT SNO1-RELATED"/>
    <property type="match status" value="1"/>
</dbReference>
<dbReference type="Pfam" id="PF01174">
    <property type="entry name" value="SNO"/>
    <property type="match status" value="1"/>
</dbReference>
<dbReference type="PIRSF" id="PIRSF005639">
    <property type="entry name" value="Glut_amidoT_SNO"/>
    <property type="match status" value="1"/>
</dbReference>
<dbReference type="SUPFAM" id="SSF52317">
    <property type="entry name" value="Class I glutamine amidotransferase-like"/>
    <property type="match status" value="1"/>
</dbReference>
<dbReference type="PROSITE" id="PS01236">
    <property type="entry name" value="PDXT_SNO_1"/>
    <property type="match status" value="1"/>
</dbReference>
<dbReference type="PROSITE" id="PS51130">
    <property type="entry name" value="PDXT_SNO_2"/>
    <property type="match status" value="1"/>
</dbReference>
<gene>
    <name evidence="1" type="primary">pdxT</name>
    <name type="ordered locus">BCA_0017</name>
</gene>
<accession>C1ES18</accession>
<comment type="function">
    <text evidence="1">Catalyzes the hydrolysis of glutamine to glutamate and ammonia as part of the biosynthesis of pyridoxal 5'-phosphate. The resulting ammonia molecule is channeled to the active site of PdxS.</text>
</comment>
<comment type="catalytic activity">
    <reaction evidence="1">
        <text>aldehydo-D-ribose 5-phosphate + D-glyceraldehyde 3-phosphate + L-glutamine = pyridoxal 5'-phosphate + L-glutamate + phosphate + 3 H2O + H(+)</text>
        <dbReference type="Rhea" id="RHEA:31507"/>
        <dbReference type="ChEBI" id="CHEBI:15377"/>
        <dbReference type="ChEBI" id="CHEBI:15378"/>
        <dbReference type="ChEBI" id="CHEBI:29985"/>
        <dbReference type="ChEBI" id="CHEBI:43474"/>
        <dbReference type="ChEBI" id="CHEBI:58273"/>
        <dbReference type="ChEBI" id="CHEBI:58359"/>
        <dbReference type="ChEBI" id="CHEBI:59776"/>
        <dbReference type="ChEBI" id="CHEBI:597326"/>
        <dbReference type="EC" id="4.3.3.6"/>
    </reaction>
</comment>
<comment type="catalytic activity">
    <reaction evidence="1">
        <text>L-glutamine + H2O = L-glutamate + NH4(+)</text>
        <dbReference type="Rhea" id="RHEA:15889"/>
        <dbReference type="ChEBI" id="CHEBI:15377"/>
        <dbReference type="ChEBI" id="CHEBI:28938"/>
        <dbReference type="ChEBI" id="CHEBI:29985"/>
        <dbReference type="ChEBI" id="CHEBI:58359"/>
        <dbReference type="EC" id="3.5.1.2"/>
    </reaction>
</comment>
<comment type="pathway">
    <text evidence="1">Cofactor biosynthesis; pyridoxal 5'-phosphate biosynthesis.</text>
</comment>
<comment type="subunit">
    <text evidence="1">In the presence of PdxS, forms a dodecamer of heterodimers. Only shows activity in the heterodimer.</text>
</comment>
<comment type="similarity">
    <text evidence="1">Belongs to the glutaminase PdxT/SNO family.</text>
</comment>
<keyword id="KW-0315">Glutamine amidotransferase</keyword>
<keyword id="KW-0378">Hydrolase</keyword>
<keyword id="KW-0456">Lyase</keyword>
<keyword id="KW-0663">Pyridoxal phosphate</keyword>